<evidence type="ECO:0000250" key="1"/>
<evidence type="ECO:0000305" key="2"/>
<sequence length="131" mass="14300">MSTLRYTLVVNGSVYGSQSARTAYQFASALIEKGHTLVSVFFYQDGVTNGTELTVPANDEFHLTKAWQQLAKQHNVRLETCVAAALRRGVVSQSEASQHGLLQHNLADGFEQAGLGSLAEAMLTQDRVVQF</sequence>
<organism>
    <name type="scientific">Vibrio vulnificus (strain CMCP6)</name>
    <dbReference type="NCBI Taxonomy" id="216895"/>
    <lineage>
        <taxon>Bacteria</taxon>
        <taxon>Pseudomonadati</taxon>
        <taxon>Pseudomonadota</taxon>
        <taxon>Gammaproteobacteria</taxon>
        <taxon>Vibrionales</taxon>
        <taxon>Vibrionaceae</taxon>
        <taxon>Vibrio</taxon>
    </lineage>
</organism>
<reference key="1">
    <citation type="submission" date="2002-12" db="EMBL/GenBank/DDBJ databases">
        <title>Complete genome sequence of Vibrio vulnificus CMCP6.</title>
        <authorList>
            <person name="Rhee J.H."/>
            <person name="Kim S.Y."/>
            <person name="Chung S.S."/>
            <person name="Kim J.J."/>
            <person name="Moon Y.H."/>
            <person name="Jeong H."/>
            <person name="Choy H.E."/>
        </authorList>
    </citation>
    <scope>NUCLEOTIDE SEQUENCE [LARGE SCALE GENOMIC DNA]</scope>
    <source>
        <strain>CMCP6</strain>
    </source>
</reference>
<keyword id="KW-0963">Cytoplasm</keyword>
<keyword id="KW-0808">Transferase</keyword>
<accession>Q8DCR3</accession>
<name>TUSD_VIBVU</name>
<dbReference type="EC" id="2.8.1.-"/>
<dbReference type="EMBL" id="AE016795">
    <property type="protein sequence ID" value="AAO09787.1"/>
    <property type="molecule type" value="Genomic_DNA"/>
</dbReference>
<dbReference type="RefSeq" id="WP_011079312.1">
    <property type="nucleotide sequence ID" value="NC_004459.3"/>
</dbReference>
<dbReference type="SMR" id="Q8DCR3"/>
<dbReference type="KEGG" id="vvu:VV1_1333"/>
<dbReference type="HOGENOM" id="CLU_132095_0_0_6"/>
<dbReference type="Proteomes" id="UP000002275">
    <property type="component" value="Chromosome 1"/>
</dbReference>
<dbReference type="GO" id="GO:1990228">
    <property type="term" value="C:sulfurtransferase complex"/>
    <property type="evidence" value="ECO:0007669"/>
    <property type="project" value="TreeGrafter"/>
</dbReference>
<dbReference type="GO" id="GO:0097163">
    <property type="term" value="F:sulfur carrier activity"/>
    <property type="evidence" value="ECO:0007669"/>
    <property type="project" value="TreeGrafter"/>
</dbReference>
<dbReference type="GO" id="GO:0016783">
    <property type="term" value="F:sulfurtransferase activity"/>
    <property type="evidence" value="ECO:0007669"/>
    <property type="project" value="InterPro"/>
</dbReference>
<dbReference type="GO" id="GO:0002143">
    <property type="term" value="P:tRNA wobble position uridine thiolation"/>
    <property type="evidence" value="ECO:0007669"/>
    <property type="project" value="TreeGrafter"/>
</dbReference>
<dbReference type="FunFam" id="3.40.1260.10:FF:000001">
    <property type="entry name" value="Sulfurtransferase TusD"/>
    <property type="match status" value="1"/>
</dbReference>
<dbReference type="Gene3D" id="3.40.1260.10">
    <property type="entry name" value="DsrEFH-like"/>
    <property type="match status" value="1"/>
</dbReference>
<dbReference type="InterPro" id="IPR027396">
    <property type="entry name" value="DsrEFH-like"/>
</dbReference>
<dbReference type="InterPro" id="IPR003787">
    <property type="entry name" value="Sulphur_relay_DsrE/F-like"/>
</dbReference>
<dbReference type="InterPro" id="IPR017463">
    <property type="entry name" value="Sulphur_relay_TusD/DsrE"/>
</dbReference>
<dbReference type="NCBIfam" id="NF001237">
    <property type="entry name" value="PRK00207.1"/>
    <property type="match status" value="1"/>
</dbReference>
<dbReference type="NCBIfam" id="TIGR03012">
    <property type="entry name" value="sulf_tusD_dsrE"/>
    <property type="match status" value="1"/>
</dbReference>
<dbReference type="PANTHER" id="PTHR34874">
    <property type="entry name" value="PROTEIN YCHN"/>
    <property type="match status" value="1"/>
</dbReference>
<dbReference type="PANTHER" id="PTHR34874:SF3">
    <property type="entry name" value="SULFURTRANSFERASE TUSD"/>
    <property type="match status" value="1"/>
</dbReference>
<dbReference type="Pfam" id="PF02635">
    <property type="entry name" value="DsrE"/>
    <property type="match status" value="1"/>
</dbReference>
<dbReference type="SUPFAM" id="SSF75169">
    <property type="entry name" value="DsrEFH-like"/>
    <property type="match status" value="1"/>
</dbReference>
<gene>
    <name type="primary">tusD</name>
    <name type="ordered locus">VV1_1333</name>
</gene>
<feature type="chain" id="PRO_0000214739" description="Sulfurtransferase TusD homolog">
    <location>
        <begin position="1"/>
        <end position="131"/>
    </location>
</feature>
<feature type="active site" description="Cysteine persulfide intermediate" evidence="1">
    <location>
        <position position="81"/>
    </location>
</feature>
<proteinExistence type="inferred from homology"/>
<comment type="function">
    <text evidence="1">Could be part of a sulfur-relay system.</text>
</comment>
<comment type="subcellular location">
    <subcellularLocation>
        <location evidence="1">Cytoplasm</location>
    </subcellularLocation>
</comment>
<comment type="similarity">
    <text evidence="2">Belongs to the DsrE/TusD family.</text>
</comment>
<protein>
    <recommendedName>
        <fullName>Sulfurtransferase TusD homolog</fullName>
        <ecNumber>2.8.1.-</ecNumber>
    </recommendedName>
</protein>